<gene>
    <name evidence="1" type="primary">tyrS</name>
    <name type="ordered locus">pc1169</name>
</gene>
<comment type="function">
    <text evidence="1">Catalyzes the attachment of tyrosine to tRNA(Tyr) in a two-step reaction: tyrosine is first activated by ATP to form Tyr-AMP and then transferred to the acceptor end of tRNA(Tyr).</text>
</comment>
<comment type="catalytic activity">
    <reaction evidence="1">
        <text>tRNA(Tyr) + L-tyrosine + ATP = L-tyrosyl-tRNA(Tyr) + AMP + diphosphate + H(+)</text>
        <dbReference type="Rhea" id="RHEA:10220"/>
        <dbReference type="Rhea" id="RHEA-COMP:9706"/>
        <dbReference type="Rhea" id="RHEA-COMP:9707"/>
        <dbReference type="ChEBI" id="CHEBI:15378"/>
        <dbReference type="ChEBI" id="CHEBI:30616"/>
        <dbReference type="ChEBI" id="CHEBI:33019"/>
        <dbReference type="ChEBI" id="CHEBI:58315"/>
        <dbReference type="ChEBI" id="CHEBI:78442"/>
        <dbReference type="ChEBI" id="CHEBI:78536"/>
        <dbReference type="ChEBI" id="CHEBI:456215"/>
        <dbReference type="EC" id="6.1.1.1"/>
    </reaction>
</comment>
<comment type="subunit">
    <text evidence="1">Homodimer.</text>
</comment>
<comment type="subcellular location">
    <subcellularLocation>
        <location evidence="1">Cytoplasm</location>
    </subcellularLocation>
</comment>
<comment type="similarity">
    <text evidence="1">Belongs to the class-I aminoacyl-tRNA synthetase family. TyrS type 1 subfamily.</text>
</comment>
<evidence type="ECO:0000255" key="1">
    <source>
        <dbReference type="HAMAP-Rule" id="MF_02006"/>
    </source>
</evidence>
<reference key="1">
    <citation type="journal article" date="2004" name="Science">
        <title>Illuminating the evolutionary history of chlamydiae.</title>
        <authorList>
            <person name="Horn M."/>
            <person name="Collingro A."/>
            <person name="Schmitz-Esser S."/>
            <person name="Beier C.L."/>
            <person name="Purkhold U."/>
            <person name="Fartmann B."/>
            <person name="Brandt P."/>
            <person name="Nyakatura G.J."/>
            <person name="Droege M."/>
            <person name="Frishman D."/>
            <person name="Rattei T."/>
            <person name="Mewes H.-W."/>
            <person name="Wagner M."/>
        </authorList>
    </citation>
    <scope>NUCLEOTIDE SEQUENCE [LARGE SCALE GENOMIC DNA]</scope>
    <source>
        <strain>UWE25</strain>
    </source>
</reference>
<accession>Q6MC06</accession>
<name>SYY_PARUW</name>
<feature type="chain" id="PRO_0000234747" description="Tyrosine--tRNA ligase">
    <location>
        <begin position="1"/>
        <end position="425"/>
    </location>
</feature>
<feature type="domain" description="S4 RNA-binding" evidence="1">
    <location>
        <begin position="356"/>
        <end position="422"/>
    </location>
</feature>
<feature type="short sequence motif" description="'HIGH' region">
    <location>
        <begin position="38"/>
        <end position="47"/>
    </location>
</feature>
<feature type="short sequence motif" description="'KMSKS' region">
    <location>
        <begin position="230"/>
        <end position="234"/>
    </location>
</feature>
<feature type="binding site" evidence="1">
    <location>
        <position position="33"/>
    </location>
    <ligand>
        <name>L-tyrosine</name>
        <dbReference type="ChEBI" id="CHEBI:58315"/>
    </ligand>
</feature>
<feature type="binding site" evidence="1">
    <location>
        <position position="170"/>
    </location>
    <ligand>
        <name>L-tyrosine</name>
        <dbReference type="ChEBI" id="CHEBI:58315"/>
    </ligand>
</feature>
<feature type="binding site" evidence="1">
    <location>
        <position position="174"/>
    </location>
    <ligand>
        <name>L-tyrosine</name>
        <dbReference type="ChEBI" id="CHEBI:58315"/>
    </ligand>
</feature>
<feature type="binding site" evidence="1">
    <location>
        <position position="233"/>
    </location>
    <ligand>
        <name>ATP</name>
        <dbReference type="ChEBI" id="CHEBI:30616"/>
    </ligand>
</feature>
<keyword id="KW-0030">Aminoacyl-tRNA synthetase</keyword>
<keyword id="KW-0067">ATP-binding</keyword>
<keyword id="KW-0963">Cytoplasm</keyword>
<keyword id="KW-0436">Ligase</keyword>
<keyword id="KW-0547">Nucleotide-binding</keyword>
<keyword id="KW-0648">Protein biosynthesis</keyword>
<keyword id="KW-1185">Reference proteome</keyword>
<keyword id="KW-0694">RNA-binding</keyword>
<protein>
    <recommendedName>
        <fullName evidence="1">Tyrosine--tRNA ligase</fullName>
        <ecNumber evidence="1">6.1.1.1</ecNumber>
    </recommendedName>
    <alternativeName>
        <fullName evidence="1">Tyrosyl-tRNA synthetase</fullName>
        <shortName evidence="1">TyrRS</shortName>
    </alternativeName>
</protein>
<proteinExistence type="inferred from homology"/>
<sequence length="425" mass="47816">MTNVMDVLRERGFIDAVTSEEIRQLTNQPIKVYCGFDPTADSLHLGNLVAIMGLAWFQRFGHTPVAIVGGATGMIGDPSGKNAERQLLDEKKIQLNLKGISKNLEAILDFNHPTAPAIILNNLDWFKNFTFISFLRDVGKLFRLSPMLAKDSVKTRLNSEEGMSFTEFCYQILQGYDFLHLFENYGVTVELGGSDQWGNITAGTDLIRKVHAKPAYGITFPLLTKSDGQKFGKSEKGAVWLSPDKLSSYEFYQHLIRVEDADVINLMRMLTFLDMGEIRHYEQMMKEADYVPRTAQKRLAEEITRLVHGEEGLKIAIKVTEGVAPGSQTSLNADILEKLAADMPSCEMKLENVLNKKLIDLLVETKLQTSKSEARRLLRNGGVYINNKKIEDENHIISVECLISSRLILLAAGKKNKMIIRLMEE</sequence>
<dbReference type="EC" id="6.1.1.1" evidence="1"/>
<dbReference type="EMBL" id="BX908798">
    <property type="protein sequence ID" value="CAF23893.1"/>
    <property type="molecule type" value="Genomic_DNA"/>
</dbReference>
<dbReference type="RefSeq" id="WP_011175719.1">
    <property type="nucleotide sequence ID" value="NC_005861.2"/>
</dbReference>
<dbReference type="SMR" id="Q6MC06"/>
<dbReference type="STRING" id="264201.pc1169"/>
<dbReference type="KEGG" id="pcu:PC_RS05635"/>
<dbReference type="eggNOG" id="COG0162">
    <property type="taxonomic scope" value="Bacteria"/>
</dbReference>
<dbReference type="HOGENOM" id="CLU_024003_0_3_0"/>
<dbReference type="OrthoDB" id="9804243at2"/>
<dbReference type="Proteomes" id="UP000000529">
    <property type="component" value="Chromosome"/>
</dbReference>
<dbReference type="GO" id="GO:0005829">
    <property type="term" value="C:cytosol"/>
    <property type="evidence" value="ECO:0007669"/>
    <property type="project" value="TreeGrafter"/>
</dbReference>
<dbReference type="GO" id="GO:0005524">
    <property type="term" value="F:ATP binding"/>
    <property type="evidence" value="ECO:0007669"/>
    <property type="project" value="UniProtKB-UniRule"/>
</dbReference>
<dbReference type="GO" id="GO:0003723">
    <property type="term" value="F:RNA binding"/>
    <property type="evidence" value="ECO:0007669"/>
    <property type="project" value="UniProtKB-KW"/>
</dbReference>
<dbReference type="GO" id="GO:0004831">
    <property type="term" value="F:tyrosine-tRNA ligase activity"/>
    <property type="evidence" value="ECO:0007669"/>
    <property type="project" value="UniProtKB-UniRule"/>
</dbReference>
<dbReference type="GO" id="GO:0006437">
    <property type="term" value="P:tyrosyl-tRNA aminoacylation"/>
    <property type="evidence" value="ECO:0007669"/>
    <property type="project" value="UniProtKB-UniRule"/>
</dbReference>
<dbReference type="CDD" id="cd00165">
    <property type="entry name" value="S4"/>
    <property type="match status" value="1"/>
</dbReference>
<dbReference type="CDD" id="cd00805">
    <property type="entry name" value="TyrRS_core"/>
    <property type="match status" value="1"/>
</dbReference>
<dbReference type="FunFam" id="1.10.240.10:FF:000001">
    <property type="entry name" value="Tyrosine--tRNA ligase"/>
    <property type="match status" value="1"/>
</dbReference>
<dbReference type="FunFam" id="3.10.290.10:FF:000014">
    <property type="entry name" value="Tyrosine--tRNA ligase"/>
    <property type="match status" value="1"/>
</dbReference>
<dbReference type="Gene3D" id="3.40.50.620">
    <property type="entry name" value="HUPs"/>
    <property type="match status" value="1"/>
</dbReference>
<dbReference type="Gene3D" id="3.10.290.10">
    <property type="entry name" value="RNA-binding S4 domain"/>
    <property type="match status" value="1"/>
</dbReference>
<dbReference type="Gene3D" id="1.10.240.10">
    <property type="entry name" value="Tyrosyl-Transfer RNA Synthetase"/>
    <property type="match status" value="1"/>
</dbReference>
<dbReference type="HAMAP" id="MF_02006">
    <property type="entry name" value="Tyr_tRNA_synth_type1"/>
    <property type="match status" value="1"/>
</dbReference>
<dbReference type="InterPro" id="IPR001412">
    <property type="entry name" value="aa-tRNA-synth_I_CS"/>
</dbReference>
<dbReference type="InterPro" id="IPR002305">
    <property type="entry name" value="aa-tRNA-synth_Ic"/>
</dbReference>
<dbReference type="InterPro" id="IPR014729">
    <property type="entry name" value="Rossmann-like_a/b/a_fold"/>
</dbReference>
<dbReference type="InterPro" id="IPR002942">
    <property type="entry name" value="S4_RNA-bd"/>
</dbReference>
<dbReference type="InterPro" id="IPR036986">
    <property type="entry name" value="S4_RNA-bd_sf"/>
</dbReference>
<dbReference type="InterPro" id="IPR054608">
    <property type="entry name" value="SYY-like_C"/>
</dbReference>
<dbReference type="InterPro" id="IPR002307">
    <property type="entry name" value="Tyr-tRNA-ligase"/>
</dbReference>
<dbReference type="InterPro" id="IPR024088">
    <property type="entry name" value="Tyr-tRNA-ligase_bac-type"/>
</dbReference>
<dbReference type="InterPro" id="IPR024107">
    <property type="entry name" value="Tyr-tRNA-ligase_bac_1"/>
</dbReference>
<dbReference type="NCBIfam" id="TIGR00234">
    <property type="entry name" value="tyrS"/>
    <property type="match status" value="1"/>
</dbReference>
<dbReference type="PANTHER" id="PTHR11766:SF0">
    <property type="entry name" value="TYROSINE--TRNA LIGASE, MITOCHONDRIAL"/>
    <property type="match status" value="1"/>
</dbReference>
<dbReference type="PANTHER" id="PTHR11766">
    <property type="entry name" value="TYROSYL-TRNA SYNTHETASE"/>
    <property type="match status" value="1"/>
</dbReference>
<dbReference type="Pfam" id="PF22421">
    <property type="entry name" value="SYY_C-terminal"/>
    <property type="match status" value="1"/>
</dbReference>
<dbReference type="Pfam" id="PF00579">
    <property type="entry name" value="tRNA-synt_1b"/>
    <property type="match status" value="1"/>
</dbReference>
<dbReference type="PRINTS" id="PR01040">
    <property type="entry name" value="TRNASYNTHTYR"/>
</dbReference>
<dbReference type="SMART" id="SM00363">
    <property type="entry name" value="S4"/>
    <property type="match status" value="1"/>
</dbReference>
<dbReference type="SUPFAM" id="SSF55174">
    <property type="entry name" value="Alpha-L RNA-binding motif"/>
    <property type="match status" value="1"/>
</dbReference>
<dbReference type="SUPFAM" id="SSF52374">
    <property type="entry name" value="Nucleotidylyl transferase"/>
    <property type="match status" value="1"/>
</dbReference>
<dbReference type="PROSITE" id="PS00178">
    <property type="entry name" value="AA_TRNA_LIGASE_I"/>
    <property type="match status" value="1"/>
</dbReference>
<dbReference type="PROSITE" id="PS50889">
    <property type="entry name" value="S4"/>
    <property type="match status" value="1"/>
</dbReference>
<organism>
    <name type="scientific">Protochlamydia amoebophila (strain UWE25)</name>
    <dbReference type="NCBI Taxonomy" id="264201"/>
    <lineage>
        <taxon>Bacteria</taxon>
        <taxon>Pseudomonadati</taxon>
        <taxon>Chlamydiota</taxon>
        <taxon>Chlamydiia</taxon>
        <taxon>Parachlamydiales</taxon>
        <taxon>Parachlamydiaceae</taxon>
        <taxon>Candidatus Protochlamydia</taxon>
    </lineage>
</organism>